<keyword id="KW-0884">PQQ biosynthesis</keyword>
<keyword id="KW-0813">Transport</keyword>
<dbReference type="EMBL" id="CP000283">
    <property type="protein sequence ID" value="ABE39265.1"/>
    <property type="molecule type" value="Genomic_DNA"/>
</dbReference>
<dbReference type="SMR" id="Q139H4"/>
<dbReference type="STRING" id="316057.RPD_2030"/>
<dbReference type="KEGG" id="rpd:RPD_2030"/>
<dbReference type="eggNOG" id="COG1235">
    <property type="taxonomic scope" value="Bacteria"/>
</dbReference>
<dbReference type="HOGENOM" id="CLU_061120_0_0_5"/>
<dbReference type="BioCyc" id="RPAL316057:RPD_RS10195-MONOMER"/>
<dbReference type="UniPathway" id="UPA00539"/>
<dbReference type="Proteomes" id="UP000001818">
    <property type="component" value="Chromosome"/>
</dbReference>
<dbReference type="GO" id="GO:0018189">
    <property type="term" value="P:pyrroloquinoline quinone biosynthetic process"/>
    <property type="evidence" value="ECO:0007669"/>
    <property type="project" value="UniProtKB-UniRule"/>
</dbReference>
<dbReference type="Gene3D" id="3.60.15.10">
    <property type="entry name" value="Ribonuclease Z/Hydroxyacylglutathione hydrolase-like"/>
    <property type="match status" value="1"/>
</dbReference>
<dbReference type="HAMAP" id="MF_00653">
    <property type="entry name" value="PQQ_syn_PqqB"/>
    <property type="match status" value="1"/>
</dbReference>
<dbReference type="InterPro" id="IPR001279">
    <property type="entry name" value="Metallo-B-lactamas"/>
</dbReference>
<dbReference type="InterPro" id="IPR011842">
    <property type="entry name" value="PQQ_synth_PqqB"/>
</dbReference>
<dbReference type="InterPro" id="IPR036866">
    <property type="entry name" value="RibonucZ/Hydroxyglut_hydro"/>
</dbReference>
<dbReference type="NCBIfam" id="TIGR02108">
    <property type="entry name" value="PQQ_syn_pqqB"/>
    <property type="match status" value="1"/>
</dbReference>
<dbReference type="PANTHER" id="PTHR42663:SF7">
    <property type="entry name" value="COENZYME PQQ SYNTHESIS PROTEIN B"/>
    <property type="match status" value="1"/>
</dbReference>
<dbReference type="PANTHER" id="PTHR42663">
    <property type="entry name" value="HYDROLASE C777.06C-RELATED-RELATED"/>
    <property type="match status" value="1"/>
</dbReference>
<dbReference type="Pfam" id="PF12706">
    <property type="entry name" value="Lactamase_B_2"/>
    <property type="match status" value="1"/>
</dbReference>
<dbReference type="SUPFAM" id="SSF56281">
    <property type="entry name" value="Metallo-hydrolase/oxidoreductase"/>
    <property type="match status" value="1"/>
</dbReference>
<name>PQQB_RHOPS</name>
<evidence type="ECO:0000255" key="1">
    <source>
        <dbReference type="HAMAP-Rule" id="MF_00653"/>
    </source>
</evidence>
<protein>
    <recommendedName>
        <fullName evidence="1">Coenzyme PQQ synthesis protein B</fullName>
    </recommendedName>
    <alternativeName>
        <fullName evidence="1">Pyrroloquinoline quinone biosynthesis protein B</fullName>
    </alternativeName>
</protein>
<gene>
    <name evidence="1" type="primary">pqqB</name>
    <name type="ordered locus">RPD_2030</name>
</gene>
<comment type="function">
    <text evidence="1">May be involved in the transport of PQQ or its precursor to the periplasm.</text>
</comment>
<comment type="pathway">
    <text evidence="1">Cofactor biosynthesis; pyrroloquinoline quinone biosynthesis.</text>
</comment>
<comment type="similarity">
    <text evidence="1">Belongs to the PqqB family.</text>
</comment>
<organism>
    <name type="scientific">Rhodopseudomonas palustris (strain BisB5)</name>
    <dbReference type="NCBI Taxonomy" id="316057"/>
    <lineage>
        <taxon>Bacteria</taxon>
        <taxon>Pseudomonadati</taxon>
        <taxon>Pseudomonadota</taxon>
        <taxon>Alphaproteobacteria</taxon>
        <taxon>Hyphomicrobiales</taxon>
        <taxon>Nitrobacteraceae</taxon>
        <taxon>Rhodopseudomonas</taxon>
    </lineage>
</organism>
<proteinExistence type="inferred from homology"/>
<sequence length="308" mass="32337">MMRVVVLGAAAGGGVPQWNCGCSVCRAAFADRDLRRTQASMAVSADGDHWFLINASPDLRQQVIATPQLHPKPGALRHSPIAGVILTNGEVDAVAGLLSMREGSPFAIYAHAKVLAILKANSIFNVLNEKLVSRRPIETDQRFEPTLPDGTLSGLDVVAFSVPGKGAWYLEGQAHPGGDAADGDTLGLTITDKATGQSIHVLTACARVTDDLKARLAGAPLVLFDGTVWRDDELITAGLGHKTGQAMGHIAMSGDEGAIAALGDLDIARKLFVHINNSNPVLLSCSAEREAAERAGWQVPADGTEVTL</sequence>
<accession>Q139H4</accession>
<feature type="chain" id="PRO_1000061661" description="Coenzyme PQQ synthesis protein B">
    <location>
        <begin position="1"/>
        <end position="308"/>
    </location>
</feature>
<reference key="1">
    <citation type="submission" date="2006-03" db="EMBL/GenBank/DDBJ databases">
        <title>Complete sequence of Rhodopseudomonas palustris BisB5.</title>
        <authorList>
            <consortium name="US DOE Joint Genome Institute"/>
            <person name="Copeland A."/>
            <person name="Lucas S."/>
            <person name="Lapidus A."/>
            <person name="Barry K."/>
            <person name="Detter J.C."/>
            <person name="Glavina del Rio T."/>
            <person name="Hammon N."/>
            <person name="Israni S."/>
            <person name="Dalin E."/>
            <person name="Tice H."/>
            <person name="Pitluck S."/>
            <person name="Chain P."/>
            <person name="Malfatti S."/>
            <person name="Shin M."/>
            <person name="Vergez L."/>
            <person name="Schmutz J."/>
            <person name="Larimer F."/>
            <person name="Land M."/>
            <person name="Hauser L."/>
            <person name="Pelletier D.A."/>
            <person name="Kyrpides N."/>
            <person name="Lykidis A."/>
            <person name="Oda Y."/>
            <person name="Harwood C.S."/>
            <person name="Richardson P."/>
        </authorList>
    </citation>
    <scope>NUCLEOTIDE SEQUENCE [LARGE SCALE GENOMIC DNA]</scope>
    <source>
        <strain>BisB5</strain>
    </source>
</reference>